<keyword id="KW-0028">Amino-acid biosynthesis</keyword>
<keyword id="KW-0055">Arginine biosynthesis</keyword>
<keyword id="KW-0067">ATP-binding</keyword>
<keyword id="KW-0963">Cytoplasm</keyword>
<keyword id="KW-0418">Kinase</keyword>
<keyword id="KW-0547">Nucleotide-binding</keyword>
<keyword id="KW-0808">Transferase</keyword>
<name>ARGB_CLOB8</name>
<accession>A6M1Z8</accession>
<protein>
    <recommendedName>
        <fullName evidence="1">Acetylglutamate kinase</fullName>
        <ecNumber evidence="1">2.7.2.8</ecNumber>
    </recommendedName>
    <alternativeName>
        <fullName evidence="1">N-acetyl-L-glutamate 5-phosphotransferase</fullName>
    </alternativeName>
    <alternativeName>
        <fullName evidence="1">NAG kinase</fullName>
        <shortName evidence="1">NAGK</shortName>
    </alternativeName>
</protein>
<sequence>MLNHTERAEVLVHALPYIQRYRGKIIVVKYGGNAMISNELRETVINDIILMKCVGIEPIVVHGGGPDISDLLNRLNHKSEFINGLRYTDDITIEVVQMVLGGKVNKNLVSLIEKFGGKAIGLCGMDGSLLKAKKIESDNDLGYVGEITKVNTEILKTTISSGYIPVVGSVALGEDDNKAYNINADTCAAKIASALKAERLILLTDVPGVMKDPKDISTLISTLRLHQIPKLCLEGIIKGGMIPKIDCCVEAIRMGVEKATILDGRVPHSILLELFSNEGIGTMIY</sequence>
<comment type="function">
    <text evidence="1">Catalyzes the ATP-dependent phosphorylation of N-acetyl-L-glutamate.</text>
</comment>
<comment type="catalytic activity">
    <reaction evidence="1">
        <text>N-acetyl-L-glutamate + ATP = N-acetyl-L-glutamyl 5-phosphate + ADP</text>
        <dbReference type="Rhea" id="RHEA:14629"/>
        <dbReference type="ChEBI" id="CHEBI:30616"/>
        <dbReference type="ChEBI" id="CHEBI:44337"/>
        <dbReference type="ChEBI" id="CHEBI:57936"/>
        <dbReference type="ChEBI" id="CHEBI:456216"/>
        <dbReference type="EC" id="2.7.2.8"/>
    </reaction>
</comment>
<comment type="pathway">
    <text evidence="1">Amino-acid biosynthesis; L-arginine biosynthesis; N(2)-acetyl-L-ornithine from L-glutamate: step 2/4.</text>
</comment>
<comment type="subcellular location">
    <subcellularLocation>
        <location evidence="1">Cytoplasm</location>
    </subcellularLocation>
</comment>
<comment type="similarity">
    <text evidence="1">Belongs to the acetylglutamate kinase family. ArgB subfamily.</text>
</comment>
<dbReference type="EC" id="2.7.2.8" evidence="1"/>
<dbReference type="EMBL" id="CP000721">
    <property type="protein sequence ID" value="ABR36628.1"/>
    <property type="molecule type" value="Genomic_DNA"/>
</dbReference>
<dbReference type="SMR" id="A6M1Z8"/>
<dbReference type="KEGG" id="cbe:Cbei_4519"/>
<dbReference type="eggNOG" id="COG0548">
    <property type="taxonomic scope" value="Bacteria"/>
</dbReference>
<dbReference type="HOGENOM" id="CLU_053680_0_0_9"/>
<dbReference type="UniPathway" id="UPA00068">
    <property type="reaction ID" value="UER00107"/>
</dbReference>
<dbReference type="Proteomes" id="UP000000565">
    <property type="component" value="Chromosome"/>
</dbReference>
<dbReference type="GO" id="GO:0005737">
    <property type="term" value="C:cytoplasm"/>
    <property type="evidence" value="ECO:0007669"/>
    <property type="project" value="UniProtKB-SubCell"/>
</dbReference>
<dbReference type="GO" id="GO:0003991">
    <property type="term" value="F:acetylglutamate kinase activity"/>
    <property type="evidence" value="ECO:0007669"/>
    <property type="project" value="UniProtKB-UniRule"/>
</dbReference>
<dbReference type="GO" id="GO:0005524">
    <property type="term" value="F:ATP binding"/>
    <property type="evidence" value="ECO:0007669"/>
    <property type="project" value="UniProtKB-UniRule"/>
</dbReference>
<dbReference type="GO" id="GO:0042450">
    <property type="term" value="P:arginine biosynthetic process via ornithine"/>
    <property type="evidence" value="ECO:0007669"/>
    <property type="project" value="UniProtKB-UniRule"/>
</dbReference>
<dbReference type="GO" id="GO:0006526">
    <property type="term" value="P:L-arginine biosynthetic process"/>
    <property type="evidence" value="ECO:0007669"/>
    <property type="project" value="UniProtKB-UniPathway"/>
</dbReference>
<dbReference type="CDD" id="cd04250">
    <property type="entry name" value="AAK_NAGK-C"/>
    <property type="match status" value="1"/>
</dbReference>
<dbReference type="FunFam" id="3.40.1160.10:FF:000004">
    <property type="entry name" value="Acetylglutamate kinase"/>
    <property type="match status" value="1"/>
</dbReference>
<dbReference type="Gene3D" id="3.40.1160.10">
    <property type="entry name" value="Acetylglutamate kinase-like"/>
    <property type="match status" value="1"/>
</dbReference>
<dbReference type="HAMAP" id="MF_00082">
    <property type="entry name" value="ArgB"/>
    <property type="match status" value="1"/>
</dbReference>
<dbReference type="InterPro" id="IPR036393">
    <property type="entry name" value="AceGlu_kinase-like_sf"/>
</dbReference>
<dbReference type="InterPro" id="IPR004662">
    <property type="entry name" value="AcgluKinase_fam"/>
</dbReference>
<dbReference type="InterPro" id="IPR037528">
    <property type="entry name" value="ArgB"/>
</dbReference>
<dbReference type="InterPro" id="IPR001048">
    <property type="entry name" value="Asp/Glu/Uridylate_kinase"/>
</dbReference>
<dbReference type="InterPro" id="IPR001057">
    <property type="entry name" value="Glu/AcGlu_kinase"/>
</dbReference>
<dbReference type="InterPro" id="IPR041727">
    <property type="entry name" value="NAGK-C"/>
</dbReference>
<dbReference type="NCBIfam" id="TIGR00761">
    <property type="entry name" value="argB"/>
    <property type="match status" value="1"/>
</dbReference>
<dbReference type="PANTHER" id="PTHR23342">
    <property type="entry name" value="N-ACETYLGLUTAMATE SYNTHASE"/>
    <property type="match status" value="1"/>
</dbReference>
<dbReference type="PANTHER" id="PTHR23342:SF0">
    <property type="entry name" value="N-ACETYLGLUTAMATE SYNTHASE, MITOCHONDRIAL"/>
    <property type="match status" value="1"/>
</dbReference>
<dbReference type="Pfam" id="PF00696">
    <property type="entry name" value="AA_kinase"/>
    <property type="match status" value="1"/>
</dbReference>
<dbReference type="PIRSF" id="PIRSF000728">
    <property type="entry name" value="NAGK"/>
    <property type="match status" value="1"/>
</dbReference>
<dbReference type="PRINTS" id="PR00474">
    <property type="entry name" value="GLU5KINASE"/>
</dbReference>
<dbReference type="SUPFAM" id="SSF53633">
    <property type="entry name" value="Carbamate kinase-like"/>
    <property type="match status" value="1"/>
</dbReference>
<feature type="chain" id="PRO_0000335621" description="Acetylglutamate kinase">
    <location>
        <begin position="1"/>
        <end position="285"/>
    </location>
</feature>
<feature type="binding site" evidence="1">
    <location>
        <begin position="64"/>
        <end position="65"/>
    </location>
    <ligand>
        <name>substrate</name>
    </ligand>
</feature>
<feature type="binding site" evidence="1">
    <location>
        <position position="86"/>
    </location>
    <ligand>
        <name>substrate</name>
    </ligand>
</feature>
<feature type="binding site" evidence="1">
    <location>
        <position position="181"/>
    </location>
    <ligand>
        <name>substrate</name>
    </ligand>
</feature>
<feature type="site" description="Transition state stabilizer" evidence="1">
    <location>
        <position position="29"/>
    </location>
</feature>
<feature type="site" description="Transition state stabilizer" evidence="1">
    <location>
        <position position="244"/>
    </location>
</feature>
<reference key="1">
    <citation type="submission" date="2007-06" db="EMBL/GenBank/DDBJ databases">
        <title>Complete sequence of Clostridium beijerinckii NCIMB 8052.</title>
        <authorList>
            <consortium name="US DOE Joint Genome Institute"/>
            <person name="Copeland A."/>
            <person name="Lucas S."/>
            <person name="Lapidus A."/>
            <person name="Barry K."/>
            <person name="Detter J.C."/>
            <person name="Glavina del Rio T."/>
            <person name="Hammon N."/>
            <person name="Israni S."/>
            <person name="Dalin E."/>
            <person name="Tice H."/>
            <person name="Pitluck S."/>
            <person name="Sims D."/>
            <person name="Brettin T."/>
            <person name="Bruce D."/>
            <person name="Tapia R."/>
            <person name="Brainard J."/>
            <person name="Schmutz J."/>
            <person name="Larimer F."/>
            <person name="Land M."/>
            <person name="Hauser L."/>
            <person name="Kyrpides N."/>
            <person name="Mikhailova N."/>
            <person name="Bennet G."/>
            <person name="Cann I."/>
            <person name="Chen J.-S."/>
            <person name="Contreras A.L."/>
            <person name="Jones D."/>
            <person name="Kashket E."/>
            <person name="Mitchell W."/>
            <person name="Stoddard S."/>
            <person name="Schwarz W."/>
            <person name="Qureshi N."/>
            <person name="Young M."/>
            <person name="Shi Z."/>
            <person name="Ezeji T."/>
            <person name="White B."/>
            <person name="Blaschek H."/>
            <person name="Richardson P."/>
        </authorList>
    </citation>
    <scope>NUCLEOTIDE SEQUENCE [LARGE SCALE GENOMIC DNA]</scope>
    <source>
        <strain>ATCC 51743 / NCIMB 8052</strain>
    </source>
</reference>
<evidence type="ECO:0000255" key="1">
    <source>
        <dbReference type="HAMAP-Rule" id="MF_00082"/>
    </source>
</evidence>
<gene>
    <name evidence="1" type="primary">argB</name>
    <name type="ordered locus">Cbei_4519</name>
</gene>
<proteinExistence type="inferred from homology"/>
<organism>
    <name type="scientific">Clostridium beijerinckii (strain ATCC 51743 / NCIMB 8052)</name>
    <name type="common">Clostridium acetobutylicum</name>
    <dbReference type="NCBI Taxonomy" id="290402"/>
    <lineage>
        <taxon>Bacteria</taxon>
        <taxon>Bacillati</taxon>
        <taxon>Bacillota</taxon>
        <taxon>Clostridia</taxon>
        <taxon>Eubacteriales</taxon>
        <taxon>Clostridiaceae</taxon>
        <taxon>Clostridium</taxon>
    </lineage>
</organism>